<reference key="1">
    <citation type="submission" date="2001-10" db="EMBL/GenBank/DDBJ databases">
        <title>Cloning and sequencing of a second human homologue of glutamate carboxypeptidase in peptidase family M20.</title>
        <authorList>
            <person name="Chen J.M."/>
            <person name="Barrett A.J."/>
        </authorList>
    </citation>
    <scope>NUCLEOTIDE SEQUENCE [MRNA]</scope>
    <source>
        <tissue>Brain</tissue>
    </source>
</reference>
<reference key="2">
    <citation type="journal article" date="2005" name="Diabetes">
        <title>Carnosine as a protective factor in diabetic nephropathy: association with a leucine repeat of the carnosinase gene CNDP1.</title>
        <authorList>
            <person name="Janssen B."/>
            <person name="Hohenadel D."/>
            <person name="Brinkkoetter P."/>
            <person name="Peters V."/>
            <person name="Rind N."/>
            <person name="Fischer C."/>
            <person name="Rychlik I."/>
            <person name="Cerna M."/>
            <person name="Romzova M."/>
            <person name="de Heer E."/>
            <person name="Baelde H."/>
            <person name="Bakker S.J."/>
            <person name="Zirie M."/>
            <person name="Rondeau E."/>
            <person name="Mathieson P."/>
            <person name="Saleem M.A."/>
            <person name="Meyer J."/>
            <person name="Koppel H."/>
            <person name="Sauerhoefer S."/>
            <person name="Bartram C.R."/>
            <person name="Nawroth P."/>
            <person name="Hammes H.P."/>
            <person name="Yard B.A."/>
            <person name="Zschocke J."/>
            <person name="van der Woude F.J."/>
        </authorList>
    </citation>
    <scope>NUCLEOTIDE SEQUENCE [MRNA]</scope>
    <scope>POLYMORPHISM</scope>
    <scope>VARIANT LEU-20 INS</scope>
</reference>
<reference key="3">
    <citation type="journal article" date="2003" name="Genome Res.">
        <title>The secreted protein discovery initiative (SPDI), a large-scale effort to identify novel human secreted and transmembrane proteins: a bioinformatics assessment.</title>
        <authorList>
            <person name="Clark H.F."/>
            <person name="Gurney A.L."/>
            <person name="Abaya E."/>
            <person name="Baker K."/>
            <person name="Baldwin D.T."/>
            <person name="Brush J."/>
            <person name="Chen J."/>
            <person name="Chow B."/>
            <person name="Chui C."/>
            <person name="Crowley C."/>
            <person name="Currell B."/>
            <person name="Deuel B."/>
            <person name="Dowd P."/>
            <person name="Eaton D."/>
            <person name="Foster J.S."/>
            <person name="Grimaldi C."/>
            <person name="Gu Q."/>
            <person name="Hass P.E."/>
            <person name="Heldens S."/>
            <person name="Huang A."/>
            <person name="Kim H.S."/>
            <person name="Klimowski L."/>
            <person name="Jin Y."/>
            <person name="Johnson S."/>
            <person name="Lee J."/>
            <person name="Lewis L."/>
            <person name="Liao D."/>
            <person name="Mark M.R."/>
            <person name="Robbie E."/>
            <person name="Sanchez C."/>
            <person name="Schoenfeld J."/>
            <person name="Seshagiri S."/>
            <person name="Simmons L."/>
            <person name="Singh J."/>
            <person name="Smith V."/>
            <person name="Stinson J."/>
            <person name="Vagts A."/>
            <person name="Vandlen R.L."/>
            <person name="Watanabe C."/>
            <person name="Wieand D."/>
            <person name="Woods K."/>
            <person name="Xie M.-H."/>
            <person name="Yansura D.G."/>
            <person name="Yi S."/>
            <person name="Yu G."/>
            <person name="Yuan J."/>
            <person name="Zhang M."/>
            <person name="Zhang Z."/>
            <person name="Goddard A.D."/>
            <person name="Wood W.I."/>
            <person name="Godowski P.J."/>
            <person name="Gray A.M."/>
        </authorList>
    </citation>
    <scope>NUCLEOTIDE SEQUENCE [LARGE SCALE MRNA]</scope>
</reference>
<reference key="4">
    <citation type="journal article" date="2005" name="Nature">
        <title>DNA sequence and analysis of human chromosome 18.</title>
        <authorList>
            <person name="Nusbaum C."/>
            <person name="Zody M.C."/>
            <person name="Borowsky M.L."/>
            <person name="Kamal M."/>
            <person name="Kodira C.D."/>
            <person name="Taylor T.D."/>
            <person name="Whittaker C.A."/>
            <person name="Chang J.L."/>
            <person name="Cuomo C.A."/>
            <person name="Dewar K."/>
            <person name="FitzGerald M.G."/>
            <person name="Yang X."/>
            <person name="Abouelleil A."/>
            <person name="Allen N.R."/>
            <person name="Anderson S."/>
            <person name="Bloom T."/>
            <person name="Bugalter B."/>
            <person name="Butler J."/>
            <person name="Cook A."/>
            <person name="DeCaprio D."/>
            <person name="Engels R."/>
            <person name="Garber M."/>
            <person name="Gnirke A."/>
            <person name="Hafez N."/>
            <person name="Hall J.L."/>
            <person name="Norman C.H."/>
            <person name="Itoh T."/>
            <person name="Jaffe D.B."/>
            <person name="Kuroki Y."/>
            <person name="Lehoczky J."/>
            <person name="Lui A."/>
            <person name="Macdonald P."/>
            <person name="Mauceli E."/>
            <person name="Mikkelsen T.S."/>
            <person name="Naylor J.W."/>
            <person name="Nicol R."/>
            <person name="Nguyen C."/>
            <person name="Noguchi H."/>
            <person name="O'Leary S.B."/>
            <person name="Piqani B."/>
            <person name="Smith C.L."/>
            <person name="Talamas J.A."/>
            <person name="Topham K."/>
            <person name="Totoki Y."/>
            <person name="Toyoda A."/>
            <person name="Wain H.M."/>
            <person name="Young S.K."/>
            <person name="Zeng Q."/>
            <person name="Zimmer A.R."/>
            <person name="Fujiyama A."/>
            <person name="Hattori M."/>
            <person name="Birren B.W."/>
            <person name="Sakaki Y."/>
            <person name="Lander E.S."/>
        </authorList>
    </citation>
    <scope>NUCLEOTIDE SEQUENCE [LARGE SCALE GENOMIC DNA]</scope>
</reference>
<reference key="5">
    <citation type="journal article" date="2004" name="Genome Res.">
        <title>The status, quality, and expansion of the NIH full-length cDNA project: the Mammalian Gene Collection (MGC).</title>
        <authorList>
            <consortium name="The MGC Project Team"/>
        </authorList>
    </citation>
    <scope>NUCLEOTIDE SEQUENCE [LARGE SCALE MRNA]</scope>
    <scope>VARIANT LEU-20 INS</scope>
    <source>
        <tissue>Brain</tissue>
        <tissue>Skin</tissue>
    </source>
</reference>
<reference key="6">
    <citation type="journal article" date="1982" name="Clin. Chim. Acta">
        <title>Human serum carnosinase: characterization, distinction from cellular carnosinase, and activation by cadmium.</title>
        <authorList>
            <person name="Lenney J.F."/>
            <person name="George R.P."/>
            <person name="Weiss A.M."/>
            <person name="Kucera C.M."/>
            <person name="Chan P.W."/>
            <person name="Rinzler G.S."/>
        </authorList>
    </citation>
    <scope>CHARACTERIZATION</scope>
</reference>
<reference key="7">
    <citation type="journal article" date="1983" name="Clin. Chim. Acta">
        <title>Homocarnosinosis: lack of serum carnosinase is the defect probably responsible for elevated brain and CSF homocarnosine.</title>
        <authorList>
            <person name="Lenney J.F."/>
            <person name="Peppers S.C."/>
            <person name="Kucera C.M."/>
            <person name="Sjaastad O."/>
        </authorList>
    </citation>
    <scope>TISSUE SPECIFICITY</scope>
</reference>
<reference key="8">
    <citation type="journal article" date="2003" name="J. Biol. Chem.">
        <title>Sequence identification and characterization of human carnosinase and a closely related non-specific dipeptidase.</title>
        <authorList>
            <person name="Teufel M."/>
            <person name="Saudek V."/>
            <person name="Ledig J.P."/>
            <person name="Bernhardt A."/>
            <person name="Boularand S."/>
            <person name="Carreau A."/>
            <person name="Cairns N.J."/>
            <person name="Carter C."/>
            <person name="Cowley D.J."/>
            <person name="Duverger D."/>
            <person name="Ganzhorn A.J."/>
            <person name="Guenet C."/>
            <person name="Heintzelmann B."/>
            <person name="Laucher V."/>
            <person name="Sauvage C."/>
            <person name="Smirnova T."/>
        </authorList>
    </citation>
    <scope>BIOPHYSICOCHEMICAL PROPERTIES</scope>
    <scope>TISSUE SPECIFICITY</scope>
    <scope>SUBCELLULAR LOCATION</scope>
    <scope>FUNCTION</scope>
    <scope>CATALYTIC ACTIVITY</scope>
    <scope>MUTAGENESIS OF HIS-132; ASP-165 AND GLU-200</scope>
</reference>
<reference key="9">
    <citation type="journal article" date="2005" name="J. Proteome Res.">
        <title>Human plasma N-glycoproteome analysis by immunoaffinity subtraction, hydrazide chemistry, and mass spectrometry.</title>
        <authorList>
            <person name="Liu T."/>
            <person name="Qian W.-J."/>
            <person name="Gritsenko M.A."/>
            <person name="Camp D.G. II"/>
            <person name="Monroe M.E."/>
            <person name="Moore R.J."/>
            <person name="Smith R.D."/>
        </authorList>
    </citation>
    <scope>GLYCOSYLATION [LARGE SCALE ANALYSIS] AT ASN-322 AND ASN-382</scope>
    <source>
        <tissue>Plasma</tissue>
    </source>
</reference>
<reference key="10">
    <citation type="journal article" date="2014" name="J. Biol. Chem.">
        <title>Metabolite proofreading in carnosine and homocarnosine synthesis: molecular identification of PM20D2 as beta-alanyl-lysine dipeptidase.</title>
        <authorList>
            <person name="Veiga-da-Cunha M."/>
            <person name="Chevalier N."/>
            <person name="Stroobant V."/>
            <person name="Vertommen D."/>
            <person name="Van Schaftingen E."/>
        </authorList>
    </citation>
    <scope>FUNCTION</scope>
    <scope>CATALYTIC ACTIVITY</scope>
    <scope>BIOPHYSICOCHEMICAL PROPERTIES</scope>
</reference>
<reference key="11">
    <citation type="submission" date="2011-07" db="PDB data bank">
        <title>Crystal structure of human carnosine dipeptidase 1.</title>
        <authorList>
            <consortium name="Structural genomics consortium (SGC)"/>
        </authorList>
    </citation>
    <scope>X-RAY CRYSTALLOGRAPHY (2.26 ANGSTROMS) OF 27-507 IN COMPLEX WITH ZINC IONS</scope>
    <scope>COFACTOR</scope>
</reference>
<comment type="function">
    <text evidence="4 8">Catalyzes the peptide bond hydrolysis in Xaa-His dipeptides, displaying the highest activity toward carnosine (beta-alanyl-L-histidine) and anserine (beta-alanyl-3-methyl-histidine).</text>
</comment>
<comment type="catalytic activity">
    <reaction evidence="4 8">
        <text>Preferential hydrolysis of the beta-Ala-|-His dipeptide (carnosine), and also anserine, Xaa-|-His dipeptides and other dipeptides including homocarnosine.</text>
        <dbReference type="EC" id="3.4.13.20"/>
    </reaction>
</comment>
<comment type="catalytic activity">
    <reaction evidence="4 8">
        <text>carnosine + H2O = beta-alanine + L-histidine</text>
        <dbReference type="Rhea" id="RHEA:59360"/>
        <dbReference type="ChEBI" id="CHEBI:15377"/>
        <dbReference type="ChEBI" id="CHEBI:57485"/>
        <dbReference type="ChEBI" id="CHEBI:57595"/>
        <dbReference type="ChEBI" id="CHEBI:57966"/>
        <dbReference type="EC" id="3.4.13.20"/>
    </reaction>
    <physiologicalReaction direction="left-to-right" evidence="12 13">
        <dbReference type="Rhea" id="RHEA:59361"/>
    </physiologicalReaction>
</comment>
<comment type="catalytic activity">
    <reaction evidence="4">
        <text>anserine + H2O = N(pros)-methyl-L-histidine + beta-alanine</text>
        <dbReference type="Rhea" id="RHEA:59576"/>
        <dbReference type="ChEBI" id="CHEBI:15377"/>
        <dbReference type="ChEBI" id="CHEBI:57966"/>
        <dbReference type="ChEBI" id="CHEBI:58445"/>
        <dbReference type="ChEBI" id="CHEBI:143076"/>
        <dbReference type="EC" id="3.4.13.20"/>
    </reaction>
    <physiologicalReaction direction="left-to-right" evidence="12">
        <dbReference type="Rhea" id="RHEA:59577"/>
    </physiologicalReaction>
</comment>
<comment type="catalytic activity">
    <reaction evidence="4">
        <text>L-alanyl-L-histidine + H2O = L-histidine + L-alanine</text>
        <dbReference type="Rhea" id="RHEA:37283"/>
        <dbReference type="ChEBI" id="CHEBI:15377"/>
        <dbReference type="ChEBI" id="CHEBI:57595"/>
        <dbReference type="ChEBI" id="CHEBI:57972"/>
        <dbReference type="ChEBI" id="CHEBI:74388"/>
    </reaction>
    <physiologicalReaction direction="left-to-right" evidence="12">
        <dbReference type="Rhea" id="RHEA:37284"/>
    </physiologicalReaction>
</comment>
<comment type="catalytic activity">
    <reaction evidence="4">
        <text>glycyl-L-histidine + H2O = L-histidine + glycine</text>
        <dbReference type="Rhea" id="RHEA:67376"/>
        <dbReference type="ChEBI" id="CHEBI:15377"/>
        <dbReference type="ChEBI" id="CHEBI:57305"/>
        <dbReference type="ChEBI" id="CHEBI:57595"/>
        <dbReference type="ChEBI" id="CHEBI:169956"/>
    </reaction>
    <physiologicalReaction direction="left-to-right" evidence="12">
        <dbReference type="Rhea" id="RHEA:67377"/>
    </physiologicalReaction>
</comment>
<comment type="catalytic activity">
    <reaction evidence="4 8">
        <text>L-homocarnosine + H2O = 4-aminobutanoate + L-histidine</text>
        <dbReference type="Rhea" id="RHEA:59572"/>
        <dbReference type="ChEBI" id="CHEBI:15377"/>
        <dbReference type="ChEBI" id="CHEBI:57595"/>
        <dbReference type="ChEBI" id="CHEBI:59888"/>
        <dbReference type="ChEBI" id="CHEBI:143075"/>
        <dbReference type="EC" id="3.4.13.20"/>
    </reaction>
    <physiologicalReaction direction="left-to-right" evidence="12 13">
        <dbReference type="Rhea" id="RHEA:59573"/>
    </physiologicalReaction>
</comment>
<comment type="cofactor">
    <cofactor evidence="10">
        <name>Zn(2+)</name>
        <dbReference type="ChEBI" id="CHEBI:29105"/>
    </cofactor>
    <text evidence="10">Binds 2 Zn(2+) ions per subunit.</text>
</comment>
<comment type="activity regulation">
    <text evidence="4">Activated by cadmium ions (PubMed:12473676). Inhibited by the metal chelator 1,10-o-phenantrolin. The inhibitory concentration 50% (IC(50)) is 5 uM.</text>
</comment>
<comment type="biophysicochemical properties">
    <kinetics>
        <KM evidence="4">1.27 uM for carnosine (at 30 degrees Celsius and in the absence of cadmium ions)</KM>
        <KM evidence="4">11 uM for carnosine (at 30 degrees Celsius and in the presence of 200 uM cadmium ions)</KM>
        <KM evidence="8">0.13 mM for carnosine</KM>
        <KM evidence="4">0.2 uM for homocarnosine (at 30 degrees Celsius and in the absence of cadmium ions)</KM>
        <KM evidence="4">1 uM for homocarnosine (at 30 degrees Celsius and in the presence of 200 uM cadmium ions)</KM>
        <KM evidence="8">8.7 mM for homocarnosine</KM>
        <Vmax evidence="8">8.5 umol/min/mg enzyme toward carnosine</Vmax>
        <Vmax evidence="8">0.36 umol/min/mg enzyme toward homocarnosine</Vmax>
        <text>1 hour incubation in 50 mM Tris-HCl, pH 7.5.</text>
    </kinetics>
    <phDependence>
        <text evidence="4">Optimum pH is 8.5.</text>
    </phDependence>
</comment>
<comment type="subunit">
    <text evidence="10">Homodimer.</text>
</comment>
<comment type="interaction">
    <interactant intactId="EBI-21014506">
        <id>Q96KN2</id>
    </interactant>
    <interactant intactId="EBI-1190734">
        <id>Q96KP4</id>
        <label>CNDP2</label>
    </interactant>
    <organismsDiffer>false</organismsDiffer>
    <experiments>2</experiments>
</comment>
<comment type="subcellular location">
    <subcellularLocation>
        <location evidence="4">Secreted</location>
    </subcellularLocation>
</comment>
<comment type="tissue specificity">
    <text evidence="4 9">Found in serum and adult nervous central system. Absent in serum from patients with homocarnosinosis.</text>
</comment>
<comment type="polymorphism">
    <text evidence="6">The number of trinucleotide (CTG) repeat varies among different alleles leading to insertion of Leu residues in the signal peptide. The allele with 5 leucines (as shown in the reference entry) is known as the Mannheim allele. Diabetic patients with the CNDP1 Mannheim allele are less susceptible for nephropathy.</text>
</comment>
<comment type="similarity">
    <text evidence="11">Belongs to the peptidase M20A family.</text>
</comment>
<sequence>MDPKLGRMAASLLAVLLLLLERGMFSSPSPPPALLEKVFQYIDLHQDEFVQTLKEWVAIESDSVQPVPRFRQELFRMMAVAADTLQRLGARVASVDMGPQQLPDGQSLPIPPVILAELGSDPTKGTVCFYGHLDVQPADRGDGWLTDPYVLTEVDGKLYGRGATDNKGPVLAWINAVSAFRALEQDLPVNIKFIIEGMEEAGSVALEELVEKEKDRFFSGVDYIVISDNLWISQRKPAITYGTRGNSYFMVEVKCRDQDFHSGTFGGILHEPMADLVALLGSLVDSSGHILVPGIYDEVVPLTEEEINTYKAIHLDLEEYRNSSRVEKFLFDTKEEILMHLWRYPSLSIHGIEGAFDEPGTKTVIPGRVIGKFSIRLVPHMNVSAVEKQVTRHLEDVFSKRNSSNKMVVSMTLGLHPWIANIDDTQYLAAKRAIRTVFGTEPDMIRDGSTIPIAKMFQEIVHKSVVLIPLGAVDDGEHSQNEKINRWNYIEGTKLFAAFFLEMAQLH</sequence>
<dbReference type="EC" id="3.4.13.20" evidence="4 8"/>
<dbReference type="EMBL" id="AJ417564">
    <property type="protein sequence ID" value="CAD10388.1"/>
    <property type="molecule type" value="mRNA"/>
</dbReference>
<dbReference type="EMBL" id="AY358756">
    <property type="protein sequence ID" value="AAQ89116.1"/>
    <property type="molecule type" value="mRNA"/>
</dbReference>
<dbReference type="EMBL" id="BC004271">
    <property type="status" value="NOT_ANNOTATED_CDS"/>
    <property type="molecule type" value="mRNA"/>
</dbReference>
<dbReference type="EMBL" id="BC110295">
    <property type="protein sequence ID" value="AAI10296.1"/>
    <property type="molecule type" value="mRNA"/>
</dbReference>
<dbReference type="EMBL" id="BC113512">
    <property type="protein sequence ID" value="AAI13513.1"/>
    <property type="molecule type" value="mRNA"/>
</dbReference>
<dbReference type="EMBL" id="BC117122">
    <property type="protein sequence ID" value="AAI17123.1"/>
    <property type="molecule type" value="mRNA"/>
</dbReference>
<dbReference type="CCDS" id="CCDS12007.1"/>
<dbReference type="RefSeq" id="NP_116038.4">
    <property type="nucleotide sequence ID" value="NM_032649.5"/>
</dbReference>
<dbReference type="PDB" id="3DLJ">
    <property type="method" value="X-ray"/>
    <property type="resolution" value="2.26 A"/>
    <property type="chains" value="A/B=27-507"/>
</dbReference>
<dbReference type="PDBsum" id="3DLJ"/>
<dbReference type="SMR" id="Q96KN2"/>
<dbReference type="BioGRID" id="124230">
    <property type="interactions" value="17"/>
</dbReference>
<dbReference type="FunCoup" id="Q96KN2">
    <property type="interactions" value="133"/>
</dbReference>
<dbReference type="IntAct" id="Q96KN2">
    <property type="interactions" value="12"/>
</dbReference>
<dbReference type="STRING" id="9606.ENSP00000351682"/>
<dbReference type="MEROPS" id="M20.006"/>
<dbReference type="GlyConnect" id="1035">
    <property type="glycosylation" value="16 N-Linked glycans (1 site)"/>
</dbReference>
<dbReference type="GlyCosmos" id="Q96KN2">
    <property type="glycosylation" value="4 sites, 19 glycans"/>
</dbReference>
<dbReference type="GlyGen" id="Q96KN2">
    <property type="glycosylation" value="4 sites, 23 N-linked glycans (2 sites), 1 O-linked glycan (2 sites)"/>
</dbReference>
<dbReference type="iPTMnet" id="Q96KN2"/>
<dbReference type="PhosphoSitePlus" id="Q96KN2"/>
<dbReference type="BioMuta" id="CNDP1"/>
<dbReference type="DMDM" id="317373563"/>
<dbReference type="CPTAC" id="CPTAC-1484"/>
<dbReference type="jPOST" id="Q96KN2"/>
<dbReference type="MassIVE" id="Q96KN2"/>
<dbReference type="PaxDb" id="9606-ENSP00000351682"/>
<dbReference type="PeptideAtlas" id="Q96KN2"/>
<dbReference type="ProteomicsDB" id="77085"/>
<dbReference type="Antibodypedia" id="2197">
    <property type="antibodies" value="395 antibodies from 32 providers"/>
</dbReference>
<dbReference type="DNASU" id="84735"/>
<dbReference type="Ensembl" id="ENST00000358821.8">
    <property type="protein sequence ID" value="ENSP00000351682.3"/>
    <property type="gene ID" value="ENSG00000150656.15"/>
</dbReference>
<dbReference type="GeneID" id="84735"/>
<dbReference type="KEGG" id="hsa:84735"/>
<dbReference type="MANE-Select" id="ENST00000358821.8">
    <property type="protein sequence ID" value="ENSP00000351682.3"/>
    <property type="RefSeq nucleotide sequence ID" value="NM_032649.6"/>
    <property type="RefSeq protein sequence ID" value="NP_116038.4"/>
</dbReference>
<dbReference type="UCSC" id="uc002llq.5">
    <property type="organism name" value="human"/>
</dbReference>
<dbReference type="AGR" id="HGNC:20675"/>
<dbReference type="CTD" id="84735"/>
<dbReference type="DisGeNET" id="84735"/>
<dbReference type="GeneCards" id="CNDP1"/>
<dbReference type="HGNC" id="HGNC:20675">
    <property type="gene designation" value="CNDP1"/>
</dbReference>
<dbReference type="HPA" id="ENSG00000150656">
    <property type="expression patterns" value="Tissue enriched (brain)"/>
</dbReference>
<dbReference type="MIM" id="609064">
    <property type="type" value="gene"/>
</dbReference>
<dbReference type="neXtProt" id="NX_Q96KN2"/>
<dbReference type="OpenTargets" id="ENSG00000150656"/>
<dbReference type="PharmGKB" id="PA134907547"/>
<dbReference type="VEuPathDB" id="HostDB:ENSG00000150656"/>
<dbReference type="eggNOG" id="KOG2276">
    <property type="taxonomic scope" value="Eukaryota"/>
</dbReference>
<dbReference type="GeneTree" id="ENSGT00940000160484"/>
<dbReference type="InParanoid" id="Q96KN2"/>
<dbReference type="OMA" id="CKGNIVM"/>
<dbReference type="OrthoDB" id="7832001at2759"/>
<dbReference type="PAN-GO" id="Q96KN2">
    <property type="GO annotations" value="3 GO annotations based on evolutionary models"/>
</dbReference>
<dbReference type="PhylomeDB" id="Q96KN2"/>
<dbReference type="TreeFam" id="TF300633"/>
<dbReference type="BioCyc" id="MetaCyc:HS07681-MONOMER"/>
<dbReference type="BRENDA" id="3.4.13.20">
    <property type="organism ID" value="2681"/>
</dbReference>
<dbReference type="PathwayCommons" id="Q96KN2"/>
<dbReference type="SABIO-RK" id="Q96KN2"/>
<dbReference type="SignaLink" id="Q96KN2"/>
<dbReference type="BioGRID-ORCS" id="84735">
    <property type="hits" value="5 hits in 1145 CRISPR screens"/>
</dbReference>
<dbReference type="EvolutionaryTrace" id="Q96KN2"/>
<dbReference type="GeneWiki" id="CNDP1"/>
<dbReference type="GenomeRNAi" id="84735"/>
<dbReference type="Pharos" id="Q96KN2">
    <property type="development level" value="Tbio"/>
</dbReference>
<dbReference type="PRO" id="PR:Q96KN2"/>
<dbReference type="Proteomes" id="UP000005640">
    <property type="component" value="Chromosome 18"/>
</dbReference>
<dbReference type="RNAct" id="Q96KN2">
    <property type="molecule type" value="protein"/>
</dbReference>
<dbReference type="Bgee" id="ENSG00000150656">
    <property type="expression patterns" value="Expressed in inferior vagus X ganglion and 123 other cell types or tissues"/>
</dbReference>
<dbReference type="ExpressionAtlas" id="Q96KN2">
    <property type="expression patterns" value="baseline and differential"/>
</dbReference>
<dbReference type="GO" id="GO:0005829">
    <property type="term" value="C:cytosol"/>
    <property type="evidence" value="ECO:0000314"/>
    <property type="project" value="MGI"/>
</dbReference>
<dbReference type="GO" id="GO:0005576">
    <property type="term" value="C:extracellular region"/>
    <property type="evidence" value="ECO:0007669"/>
    <property type="project" value="UniProtKB-SubCell"/>
</dbReference>
<dbReference type="GO" id="GO:0004180">
    <property type="term" value="F:carboxypeptidase activity"/>
    <property type="evidence" value="ECO:0007669"/>
    <property type="project" value="UniProtKB-KW"/>
</dbReference>
<dbReference type="GO" id="GO:0016805">
    <property type="term" value="F:dipeptidase activity"/>
    <property type="evidence" value="ECO:0000314"/>
    <property type="project" value="MGI"/>
</dbReference>
<dbReference type="GO" id="GO:0046872">
    <property type="term" value="F:metal ion binding"/>
    <property type="evidence" value="ECO:0007669"/>
    <property type="project" value="UniProtKB-KW"/>
</dbReference>
<dbReference type="GO" id="GO:0070573">
    <property type="term" value="F:metallodipeptidase activity"/>
    <property type="evidence" value="ECO:0007669"/>
    <property type="project" value="InterPro"/>
</dbReference>
<dbReference type="GO" id="GO:0006508">
    <property type="term" value="P:proteolysis"/>
    <property type="evidence" value="ECO:0000314"/>
    <property type="project" value="MGI"/>
</dbReference>
<dbReference type="GO" id="GO:0051246">
    <property type="term" value="P:regulation of protein metabolic process"/>
    <property type="evidence" value="ECO:0000314"/>
    <property type="project" value="MGI"/>
</dbReference>
<dbReference type="CDD" id="cd05676">
    <property type="entry name" value="M20_dipept_like_CNDP"/>
    <property type="match status" value="1"/>
</dbReference>
<dbReference type="FunFam" id="3.30.70.360:FF:000008">
    <property type="entry name" value="Cytosolic non-specific dipeptidase"/>
    <property type="match status" value="1"/>
</dbReference>
<dbReference type="FunFam" id="3.40.630.10:FF:000014">
    <property type="entry name" value="Cytosolic non-specific dipeptidase"/>
    <property type="match status" value="1"/>
</dbReference>
<dbReference type="Gene3D" id="3.30.70.360">
    <property type="match status" value="1"/>
</dbReference>
<dbReference type="Gene3D" id="3.40.630.10">
    <property type="entry name" value="Zn peptidases"/>
    <property type="match status" value="1"/>
</dbReference>
<dbReference type="InterPro" id="IPR001261">
    <property type="entry name" value="ArgE/DapE_CS"/>
</dbReference>
<dbReference type="InterPro" id="IPR017153">
    <property type="entry name" value="CNDP/DUG1"/>
</dbReference>
<dbReference type="InterPro" id="IPR051458">
    <property type="entry name" value="Cyt/Met_Dipeptidase"/>
</dbReference>
<dbReference type="InterPro" id="IPR002933">
    <property type="entry name" value="Peptidase_M20"/>
</dbReference>
<dbReference type="InterPro" id="IPR011650">
    <property type="entry name" value="Peptidase_M20_dimer"/>
</dbReference>
<dbReference type="PANTHER" id="PTHR43270">
    <property type="entry name" value="BETA-ALA-HIS DIPEPTIDASE"/>
    <property type="match status" value="1"/>
</dbReference>
<dbReference type="PANTHER" id="PTHR43270:SF1">
    <property type="entry name" value="BETA-ALA-HIS DIPEPTIDASE"/>
    <property type="match status" value="1"/>
</dbReference>
<dbReference type="Pfam" id="PF07687">
    <property type="entry name" value="M20_dimer"/>
    <property type="match status" value="1"/>
</dbReference>
<dbReference type="Pfam" id="PF01546">
    <property type="entry name" value="Peptidase_M20"/>
    <property type="match status" value="1"/>
</dbReference>
<dbReference type="PIRSF" id="PIRSF037242">
    <property type="entry name" value="CNDP_dipeptidase"/>
    <property type="match status" value="1"/>
</dbReference>
<dbReference type="SUPFAM" id="SSF53187">
    <property type="entry name" value="Zn-dependent exopeptidases"/>
    <property type="match status" value="1"/>
</dbReference>
<dbReference type="PROSITE" id="PS00759">
    <property type="entry name" value="ARGE_DAPE_CPG2_2"/>
    <property type="match status" value="1"/>
</dbReference>
<keyword id="KW-0002">3D-structure</keyword>
<keyword id="KW-0121">Carboxypeptidase</keyword>
<keyword id="KW-0325">Glycoprotein</keyword>
<keyword id="KW-0378">Hydrolase</keyword>
<keyword id="KW-0479">Metal-binding</keyword>
<keyword id="KW-0482">Metalloprotease</keyword>
<keyword id="KW-0597">Phosphoprotein</keyword>
<keyword id="KW-0645">Protease</keyword>
<keyword id="KW-1267">Proteomics identification</keyword>
<keyword id="KW-1185">Reference proteome</keyword>
<keyword id="KW-0964">Secreted</keyword>
<keyword id="KW-0732">Signal</keyword>
<keyword id="KW-0862">Zinc</keyword>
<name>CNDP1_HUMAN</name>
<proteinExistence type="evidence at protein level"/>
<accession>Q96KN2</accession>
<accession>Q14D40</accession>
<accession>Q17S05</accession>
<accession>Q2TBG0</accession>
<accession>Q6UWK2</accession>
<accession>Q9BT98</accession>
<organism>
    <name type="scientific">Homo sapiens</name>
    <name type="common">Human</name>
    <dbReference type="NCBI Taxonomy" id="9606"/>
    <lineage>
        <taxon>Eukaryota</taxon>
        <taxon>Metazoa</taxon>
        <taxon>Chordata</taxon>
        <taxon>Craniata</taxon>
        <taxon>Vertebrata</taxon>
        <taxon>Euteleostomi</taxon>
        <taxon>Mammalia</taxon>
        <taxon>Eutheria</taxon>
        <taxon>Euarchontoglires</taxon>
        <taxon>Primates</taxon>
        <taxon>Haplorrhini</taxon>
        <taxon>Catarrhini</taxon>
        <taxon>Hominidae</taxon>
        <taxon>Homo</taxon>
    </lineage>
</organism>
<protein>
    <recommendedName>
        <fullName evidence="11">Beta-Ala-His dipeptidase</fullName>
        <ecNumber evidence="4 8">3.4.13.20</ecNumber>
    </recommendedName>
    <alternativeName>
        <fullName>CNDP dipeptidase 1</fullName>
    </alternativeName>
    <alternativeName>
        <fullName>Carnosine dipeptidase 1</fullName>
    </alternativeName>
    <alternativeName>
        <fullName>Glutamate carboxypeptidase-like protein 2</fullName>
    </alternativeName>
    <alternativeName>
        <fullName>Serum carnosinase</fullName>
    </alternativeName>
</protein>
<feature type="signal peptide" evidence="3">
    <location>
        <begin position="1"/>
        <end position="26"/>
    </location>
</feature>
<feature type="chain" id="PRO_0000026809" description="Beta-Ala-His dipeptidase">
    <location>
        <begin position="27"/>
        <end position="507"/>
    </location>
</feature>
<feature type="active site" evidence="1">
    <location>
        <position position="134"/>
    </location>
</feature>
<feature type="active site" description="Proton acceptor" evidence="1">
    <location>
        <position position="199"/>
    </location>
</feature>
<feature type="binding site" evidence="10">
    <location>
        <position position="132"/>
    </location>
    <ligand>
        <name>Zn(2+)</name>
        <dbReference type="ChEBI" id="CHEBI:29105"/>
        <label>2</label>
    </ligand>
</feature>
<feature type="binding site" evidence="10">
    <location>
        <position position="165"/>
    </location>
    <ligand>
        <name>Zn(2+)</name>
        <dbReference type="ChEBI" id="CHEBI:29105"/>
        <label>1</label>
    </ligand>
</feature>
<feature type="binding site" evidence="10">
    <location>
        <position position="165"/>
    </location>
    <ligand>
        <name>Zn(2+)</name>
        <dbReference type="ChEBI" id="CHEBI:29105"/>
        <label>2</label>
    </ligand>
</feature>
<feature type="binding site" evidence="10">
    <location>
        <position position="200"/>
    </location>
    <ligand>
        <name>Zn(2+)</name>
        <dbReference type="ChEBI" id="CHEBI:29105"/>
        <label>1</label>
    </ligand>
</feature>
<feature type="binding site" evidence="10">
    <location>
        <position position="228"/>
    </location>
    <ligand>
        <name>Zn(2+)</name>
        <dbReference type="ChEBI" id="CHEBI:29105"/>
        <label>2</label>
    </ligand>
</feature>
<feature type="binding site" evidence="10">
    <location>
        <position position="478"/>
    </location>
    <ligand>
        <name>Zn(2+)</name>
        <dbReference type="ChEBI" id="CHEBI:29105"/>
        <label>1</label>
    </ligand>
</feature>
<feature type="modified residue" description="Phosphoserine" evidence="2">
    <location>
        <position position="219"/>
    </location>
</feature>
<feature type="glycosylation site" description="N-linked (GlcNAc...) asparagine" evidence="7">
    <location>
        <position position="322"/>
    </location>
</feature>
<feature type="glycosylation site" description="N-linked (GlcNAc...) asparagine" evidence="7">
    <location>
        <position position="382"/>
    </location>
</feature>
<feature type="sequence variant" id="VAR_027147" description="In dbSNP:rs11151964.">
    <original>G</original>
    <variation>R</variation>
    <location>
        <position position="6"/>
    </location>
</feature>
<feature type="sequence variant" id="VAR_027148" evidence="5 6">
    <original>L</original>
    <variation>LL</variation>
    <location>
        <position position="20"/>
    </location>
</feature>
<feature type="sequence variant" id="VAR_027149" description="In dbSNP:rs4263028.">
    <original>V</original>
    <variation>I</variation>
    <location>
        <position position="113"/>
    </location>
</feature>
<feature type="mutagenesis site" description="Loss of activity." evidence="4">
    <original>H</original>
    <variation>A</variation>
    <location>
        <position position="132"/>
    </location>
</feature>
<feature type="mutagenesis site" description="Loss of activity." evidence="4">
    <original>D</original>
    <variation>A</variation>
    <location>
        <position position="165"/>
    </location>
</feature>
<feature type="mutagenesis site" description="Loss of activity." evidence="4">
    <original>E</original>
    <variation>A</variation>
    <location>
        <position position="200"/>
    </location>
</feature>
<feature type="sequence conflict" description="In Ref. 1; CAD10388 and 5; AAI10296." evidence="11" ref="1 5">
    <original>D</original>
    <variation>G</variation>
    <location>
        <position position="155"/>
    </location>
</feature>
<feature type="sequence conflict" description="In Ref. 1; CAD10388." evidence="11" ref="1">
    <original>P</original>
    <variation>L</variation>
    <location>
        <position position="237"/>
    </location>
</feature>
<feature type="sequence conflict" description="In Ref. 1; CAD10388." evidence="11" ref="1">
    <original>P</original>
    <variation>L</variation>
    <location>
        <position position="272"/>
    </location>
</feature>
<feature type="helix" evidence="15">
    <location>
        <begin position="35"/>
        <end position="44"/>
    </location>
</feature>
<feature type="helix" evidence="15">
    <location>
        <begin position="46"/>
        <end position="57"/>
    </location>
</feature>
<feature type="strand" evidence="15">
    <location>
        <begin position="62"/>
        <end position="65"/>
    </location>
</feature>
<feature type="helix" evidence="15">
    <location>
        <begin position="68"/>
        <end position="87"/>
    </location>
</feature>
<feature type="strand" evidence="15">
    <location>
        <begin position="91"/>
        <end position="95"/>
    </location>
</feature>
<feature type="strand" evidence="15">
    <location>
        <begin position="99"/>
        <end position="101"/>
    </location>
</feature>
<feature type="strand" evidence="15">
    <location>
        <begin position="107"/>
        <end position="109"/>
    </location>
</feature>
<feature type="strand" evidence="15">
    <location>
        <begin position="113"/>
        <end position="118"/>
    </location>
</feature>
<feature type="strand" evidence="15">
    <location>
        <begin position="126"/>
        <end position="132"/>
    </location>
</feature>
<feature type="helix" evidence="15">
    <location>
        <begin position="140"/>
        <end position="142"/>
    </location>
</feature>
<feature type="strand" evidence="15">
    <location>
        <begin position="152"/>
        <end position="154"/>
    </location>
</feature>
<feature type="strand" evidence="15">
    <location>
        <begin position="157"/>
        <end position="160"/>
    </location>
</feature>
<feature type="turn" evidence="15">
    <location>
        <begin position="161"/>
        <end position="166"/>
    </location>
</feature>
<feature type="helix" evidence="15">
    <location>
        <begin position="167"/>
        <end position="182"/>
    </location>
</feature>
<feature type="strand" evidence="15">
    <location>
        <begin position="188"/>
        <end position="197"/>
    </location>
</feature>
<feature type="helix" evidence="15">
    <location>
        <begin position="199"/>
        <end position="201"/>
    </location>
</feature>
<feature type="turn" evidence="15">
    <location>
        <begin position="202"/>
        <end position="205"/>
    </location>
</feature>
<feature type="helix" evidence="15">
    <location>
        <begin position="206"/>
        <end position="213"/>
    </location>
</feature>
<feature type="turn" evidence="15">
    <location>
        <begin position="214"/>
        <end position="217"/>
    </location>
</feature>
<feature type="strand" evidence="15">
    <location>
        <begin position="223"/>
        <end position="226"/>
    </location>
</feature>
<feature type="strand" evidence="15">
    <location>
        <begin position="238"/>
        <end position="243"/>
    </location>
</feature>
<feature type="strand" evidence="15">
    <location>
        <begin position="245"/>
        <end position="255"/>
    </location>
</feature>
<feature type="turn" evidence="15">
    <location>
        <begin position="262"/>
        <end position="264"/>
    </location>
</feature>
<feature type="helix" evidence="15">
    <location>
        <begin position="272"/>
        <end position="280"/>
    </location>
</feature>
<feature type="turn" evidence="15">
    <location>
        <begin position="293"/>
        <end position="298"/>
    </location>
</feature>
<feature type="helix" evidence="15">
    <location>
        <begin position="304"/>
        <end position="311"/>
    </location>
</feature>
<feature type="helix" evidence="15">
    <location>
        <begin position="317"/>
        <end position="324"/>
    </location>
</feature>
<feature type="helix" evidence="15">
    <location>
        <begin position="334"/>
        <end position="342"/>
    </location>
</feature>
<feature type="strand" evidence="15">
    <location>
        <begin position="346"/>
        <end position="355"/>
    </location>
</feature>
<feature type="strand" evidence="15">
    <location>
        <begin position="358"/>
        <end position="360"/>
    </location>
</feature>
<feature type="strand" evidence="15">
    <location>
        <begin position="367"/>
        <end position="377"/>
    </location>
</feature>
<feature type="helix" evidence="15">
    <location>
        <begin position="383"/>
        <end position="399"/>
    </location>
</feature>
<feature type="strand" evidence="15">
    <location>
        <begin position="404"/>
        <end position="415"/>
    </location>
</feature>
<feature type="helix" evidence="15">
    <location>
        <begin position="425"/>
        <end position="438"/>
    </location>
</feature>
<feature type="strand" evidence="15">
    <location>
        <begin position="443"/>
        <end position="449"/>
    </location>
</feature>
<feature type="helix" evidence="15">
    <location>
        <begin position="452"/>
        <end position="460"/>
    </location>
</feature>
<feature type="strand" evidence="15">
    <location>
        <begin position="483"/>
        <end position="485"/>
    </location>
</feature>
<feature type="helix" evidence="15">
    <location>
        <begin position="486"/>
        <end position="504"/>
    </location>
</feature>
<gene>
    <name evidence="14" type="primary">CNDP1</name>
    <name type="synonym">CN1</name>
    <name type="synonym">CPGL2</name>
    <name type="ORF">UNQ1915/PRO4380</name>
</gene>
<evidence type="ECO:0000250" key="1"/>
<evidence type="ECO:0000250" key="2">
    <source>
        <dbReference type="UniProtKB" id="Q66HG3"/>
    </source>
</evidence>
<evidence type="ECO:0000255" key="3"/>
<evidence type="ECO:0000269" key="4">
    <source>
    </source>
</evidence>
<evidence type="ECO:0000269" key="5">
    <source>
    </source>
</evidence>
<evidence type="ECO:0000269" key="6">
    <source>
    </source>
</evidence>
<evidence type="ECO:0000269" key="7">
    <source>
    </source>
</evidence>
<evidence type="ECO:0000269" key="8">
    <source>
    </source>
</evidence>
<evidence type="ECO:0000269" key="9">
    <source>
    </source>
</evidence>
<evidence type="ECO:0000269" key="10">
    <source ref="11"/>
</evidence>
<evidence type="ECO:0000305" key="11"/>
<evidence type="ECO:0000305" key="12">
    <source>
    </source>
</evidence>
<evidence type="ECO:0000305" key="13">
    <source>
    </source>
</evidence>
<evidence type="ECO:0000312" key="14">
    <source>
        <dbReference type="HGNC" id="HGNC:20675"/>
    </source>
</evidence>
<evidence type="ECO:0007829" key="15">
    <source>
        <dbReference type="PDB" id="3DLJ"/>
    </source>
</evidence>